<sequence>MKRSMRSHLAKQTRSVIFTGYPVIGSQDRIMSSGACLDSHQNGLITSCPWDPRIKGEFFYQTALSVPLTHVKDFINDIKALVKIEPKSLCGLELNYGVLVRYVTSSPAYLRKEEKALDFDLTYYRSKDDPWTPRLYEDYMEEIEQMAILKYNALPHWGKNRNLAFDGAIKKYKNANTFLKVKERLDPWGLFSTEWTDQILGLKGNVTIVKQGCAPEGLCICSDDSHCAPNKGYMCRPGKVYKEARVCTLVTA</sequence>
<organism evidence="7">
    <name type="scientific">Arabidopsis thaliana</name>
    <name type="common">Mouse-ear cress</name>
    <dbReference type="NCBI Taxonomy" id="3702"/>
    <lineage>
        <taxon>Eukaryota</taxon>
        <taxon>Viridiplantae</taxon>
        <taxon>Streptophyta</taxon>
        <taxon>Embryophyta</taxon>
        <taxon>Tracheophyta</taxon>
        <taxon>Spermatophyta</taxon>
        <taxon>Magnoliopsida</taxon>
        <taxon>eudicotyledons</taxon>
        <taxon>Gunneridae</taxon>
        <taxon>Pentapetalae</taxon>
        <taxon>rosids</taxon>
        <taxon>malvids</taxon>
        <taxon>Brassicales</taxon>
        <taxon>Brassicaceae</taxon>
        <taxon>Camelineae</taxon>
        <taxon>Arabidopsis</taxon>
    </lineage>
</organism>
<keyword id="KW-0060">Ascorbate biosynthesis</keyword>
<keyword id="KW-0496">Mitochondrion</keyword>
<keyword id="KW-0560">Oxidoreductase</keyword>
<keyword id="KW-1185">Reference proteome</keyword>
<keyword id="KW-0809">Transit peptide</keyword>
<proteinExistence type="inferred from homology"/>
<comment type="function">
    <text evidence="4">May be involved in the biosynthesis of ascorbic acid.</text>
</comment>
<comment type="catalytic activity">
    <reaction evidence="3">
        <text>L-gulono-1,4-lactone + O2 = L-ascorbate + H2O2 + H(+)</text>
        <dbReference type="Rhea" id="RHEA:32363"/>
        <dbReference type="ChEBI" id="CHEBI:15378"/>
        <dbReference type="ChEBI" id="CHEBI:15379"/>
        <dbReference type="ChEBI" id="CHEBI:16240"/>
        <dbReference type="ChEBI" id="CHEBI:17587"/>
        <dbReference type="ChEBI" id="CHEBI:38290"/>
        <dbReference type="EC" id="1.1.3.8"/>
    </reaction>
</comment>
<comment type="pathway">
    <text evidence="4">Cofactor biosynthesis; L-ascorbate biosynthesis.</text>
</comment>
<comment type="subcellular location">
    <subcellularLocation>
        <location evidence="1">Mitochondrion</location>
    </subcellularLocation>
</comment>
<comment type="domain">
    <text evidence="3">Lacks an FAD-binding domain present in all the other members of the family.</text>
</comment>
<comment type="similarity">
    <text evidence="3">Belongs to the oxygen-dependent FAD-linked oxidoreductase family.</text>
</comment>
<name>GGLO7_ARATH</name>
<feature type="transit peptide" description="Mitochondrion" evidence="1">
    <location>
        <begin position="1"/>
        <end position="102"/>
    </location>
</feature>
<feature type="chain" id="PRO_0000432508" description="Probable truncated L-gulonolactone oxidase 7, mitochondrial" evidence="1">
    <location>
        <begin position="103"/>
        <end position="252"/>
    </location>
</feature>
<dbReference type="EC" id="1.1.3.8" evidence="3"/>
<dbReference type="EMBL" id="AB009049">
    <property type="protein sequence ID" value="BAB11275.1"/>
    <property type="molecule type" value="Genomic_DNA"/>
</dbReference>
<dbReference type="EMBL" id="CP002688">
    <property type="protein sequence ID" value="AED96770.1"/>
    <property type="molecule type" value="Genomic_DNA"/>
</dbReference>
<dbReference type="RefSeq" id="NP_200458.1">
    <property type="nucleotide sequence ID" value="NM_125030.1"/>
</dbReference>
<dbReference type="SMR" id="Q9FM84"/>
<dbReference type="FunCoup" id="Q9FM84">
    <property type="interactions" value="267"/>
</dbReference>
<dbReference type="STRING" id="3702.Q9FM84"/>
<dbReference type="PaxDb" id="3702-AT5G56470.1"/>
<dbReference type="EnsemblPlants" id="AT5G56470.1">
    <property type="protein sequence ID" value="AT5G56470.1"/>
    <property type="gene ID" value="AT5G56470"/>
</dbReference>
<dbReference type="GeneID" id="835748"/>
<dbReference type="Gramene" id="AT5G56470.1">
    <property type="protein sequence ID" value="AT5G56470.1"/>
    <property type="gene ID" value="AT5G56470"/>
</dbReference>
<dbReference type="KEGG" id="ath:AT5G56470"/>
<dbReference type="Araport" id="AT5G56470"/>
<dbReference type="TAIR" id="AT5G56470">
    <property type="gene designation" value="GULLO7"/>
</dbReference>
<dbReference type="eggNOG" id="KOG4730">
    <property type="taxonomic scope" value="Eukaryota"/>
</dbReference>
<dbReference type="HOGENOM" id="CLU_019762_1_0_1"/>
<dbReference type="InParanoid" id="Q9FM84"/>
<dbReference type="OMA" id="PRINGMS"/>
<dbReference type="PhylomeDB" id="Q9FM84"/>
<dbReference type="UniPathway" id="UPA00132"/>
<dbReference type="PRO" id="PR:Q9FM84"/>
<dbReference type="Proteomes" id="UP000006548">
    <property type="component" value="Chromosome 5"/>
</dbReference>
<dbReference type="ExpressionAtlas" id="Q9FM84">
    <property type="expression patterns" value="baseline and differential"/>
</dbReference>
<dbReference type="GO" id="GO:0016020">
    <property type="term" value="C:membrane"/>
    <property type="evidence" value="ECO:0007669"/>
    <property type="project" value="InterPro"/>
</dbReference>
<dbReference type="GO" id="GO:0005739">
    <property type="term" value="C:mitochondrion"/>
    <property type="evidence" value="ECO:0007669"/>
    <property type="project" value="UniProtKB-SubCell"/>
</dbReference>
<dbReference type="GO" id="GO:0003885">
    <property type="term" value="F:D-arabinono-1,4-lactone oxidase activity"/>
    <property type="evidence" value="ECO:0007669"/>
    <property type="project" value="InterPro"/>
</dbReference>
<dbReference type="GO" id="GO:0050105">
    <property type="term" value="F:L-gulonolactone oxidase activity"/>
    <property type="evidence" value="ECO:0007669"/>
    <property type="project" value="UniProtKB-EC"/>
</dbReference>
<dbReference type="GO" id="GO:0019853">
    <property type="term" value="P:L-ascorbic acid biosynthetic process"/>
    <property type="evidence" value="ECO:0007669"/>
    <property type="project" value="UniProtKB-UniPathway"/>
</dbReference>
<dbReference type="FunFam" id="3.30.70.2520:FF:000003">
    <property type="entry name" value="L-gulonolactone oxidase 2"/>
    <property type="match status" value="1"/>
</dbReference>
<dbReference type="Gene3D" id="3.30.70.2520">
    <property type="match status" value="1"/>
</dbReference>
<dbReference type="InterPro" id="IPR007173">
    <property type="entry name" value="ALO_C"/>
</dbReference>
<dbReference type="InterPro" id="IPR050432">
    <property type="entry name" value="FAD-linked_Oxidoreductases_BP"/>
</dbReference>
<dbReference type="InterPro" id="IPR055154">
    <property type="entry name" value="GULLO2-like_C"/>
</dbReference>
<dbReference type="InterPro" id="IPR010030">
    <property type="entry name" value="GULO_Plant"/>
</dbReference>
<dbReference type="NCBIfam" id="TIGR01677">
    <property type="entry name" value="pln_FAD_oxido"/>
    <property type="match status" value="1"/>
</dbReference>
<dbReference type="PANTHER" id="PTHR13878">
    <property type="entry name" value="GULONOLACTONE OXIDASE"/>
    <property type="match status" value="1"/>
</dbReference>
<dbReference type="PANTHER" id="PTHR13878:SF169">
    <property type="entry name" value="L-GULONOLACTONE OXIDASE 1-RELATED"/>
    <property type="match status" value="1"/>
</dbReference>
<dbReference type="Pfam" id="PF04030">
    <property type="entry name" value="ALO"/>
    <property type="match status" value="1"/>
</dbReference>
<dbReference type="Pfam" id="PF22906">
    <property type="entry name" value="GULLO2-like_3rd"/>
    <property type="match status" value="1"/>
</dbReference>
<accession>Q9FM84</accession>
<protein>
    <recommendedName>
        <fullName evidence="2">Probable truncated L-gulonolactone oxidase 7, mitochondrial</fullName>
        <shortName evidence="2">AtGulLO7</shortName>
        <ecNumber evidence="3">1.1.3.8</ecNumber>
    </recommendedName>
</protein>
<gene>
    <name evidence="2" type="primary">GULLO7</name>
    <name evidence="5" type="ordered locus">At5g56470</name>
    <name evidence="6" type="ORF">MCD7.24</name>
</gene>
<reference key="1">
    <citation type="journal article" date="1998" name="DNA Res.">
        <title>Structural analysis of Arabidopsis thaliana chromosome 5. IV. Sequence features of the regions of 1,456,315 bp covered by nineteen physically assigned P1 and TAC clones.</title>
        <authorList>
            <person name="Sato S."/>
            <person name="Kaneko T."/>
            <person name="Kotani H."/>
            <person name="Nakamura Y."/>
            <person name="Asamizu E."/>
            <person name="Miyajima N."/>
            <person name="Tabata S."/>
        </authorList>
    </citation>
    <scope>NUCLEOTIDE SEQUENCE [LARGE SCALE GENOMIC DNA]</scope>
    <source>
        <strain>cv. Columbia</strain>
    </source>
</reference>
<reference key="2">
    <citation type="journal article" date="2017" name="Plant J.">
        <title>Araport11: a complete reannotation of the Arabidopsis thaliana reference genome.</title>
        <authorList>
            <person name="Cheng C.Y."/>
            <person name="Krishnakumar V."/>
            <person name="Chan A.P."/>
            <person name="Thibaud-Nissen F."/>
            <person name="Schobel S."/>
            <person name="Town C.D."/>
        </authorList>
    </citation>
    <scope>GENOME REANNOTATION</scope>
    <source>
        <strain>cv. Columbia</strain>
    </source>
</reference>
<reference key="3">
    <citation type="journal article" date="2010" name="Biosci. Biotechnol. Biochem.">
        <title>The contribution of Arabidopsis homologs of L-gulono-1,4-lactone oxidase to the biosynthesis of ascorbic acid.</title>
        <authorList>
            <person name="Maruta T."/>
            <person name="Ichikawa Y."/>
            <person name="Mieda T."/>
            <person name="Takeda T."/>
            <person name="Tamoi M."/>
            <person name="Yabuta Y."/>
            <person name="Ishikawa T."/>
            <person name="Shigeoka S."/>
        </authorList>
    </citation>
    <scope>FUNCTION</scope>
</reference>
<evidence type="ECO:0000255" key="1"/>
<evidence type="ECO:0000303" key="2">
    <source>
    </source>
</evidence>
<evidence type="ECO:0000305" key="3"/>
<evidence type="ECO:0000305" key="4">
    <source>
    </source>
</evidence>
<evidence type="ECO:0000312" key="5">
    <source>
        <dbReference type="Araport" id="AT5G56470"/>
    </source>
</evidence>
<evidence type="ECO:0000312" key="6">
    <source>
        <dbReference type="EMBL" id="BAB11275.1"/>
    </source>
</evidence>
<evidence type="ECO:0000312" key="7">
    <source>
        <dbReference type="Proteomes" id="UP000006548"/>
    </source>
</evidence>